<keyword id="KW-0963">Cytoplasm</keyword>
<keyword id="KW-0880">Kelch repeat</keyword>
<keyword id="KW-0539">Nucleus</keyword>
<keyword id="KW-1185">Reference proteome</keyword>
<keyword id="KW-0677">Repeat</keyword>
<keyword id="KW-0833">Ubl conjugation pathway</keyword>
<organism>
    <name type="scientific">Rattus norvegicus</name>
    <name type="common">Rat</name>
    <dbReference type="NCBI Taxonomy" id="10116"/>
    <lineage>
        <taxon>Eukaryota</taxon>
        <taxon>Metazoa</taxon>
        <taxon>Chordata</taxon>
        <taxon>Craniata</taxon>
        <taxon>Vertebrata</taxon>
        <taxon>Euteleostomi</taxon>
        <taxon>Mammalia</taxon>
        <taxon>Eutheria</taxon>
        <taxon>Euarchontoglires</taxon>
        <taxon>Glires</taxon>
        <taxon>Rodentia</taxon>
        <taxon>Myomorpha</taxon>
        <taxon>Muroidea</taxon>
        <taxon>Muridae</taxon>
        <taxon>Murinae</taxon>
        <taxon>Rattus</taxon>
    </lineage>
</organism>
<proteinExistence type="evidence at transcript level"/>
<reference key="1">
    <citation type="journal article" date="2004" name="Genome Res.">
        <title>The status, quality, and expansion of the NIH full-length cDNA project: the Mammalian Gene Collection (MGC).</title>
        <authorList>
            <consortium name="The MGC Project Team"/>
        </authorList>
    </citation>
    <scope>NUCLEOTIDE SEQUENCE [LARGE SCALE MRNA]</scope>
    <source>
        <tissue>Testis</tissue>
    </source>
</reference>
<gene>
    <name type="primary">Klhl7</name>
</gene>
<sequence>MATSGVEKSSKKKTEKKLAAREEAKLLAGFMGVMNNMRKQRTLCDVILMVQERKIPAHRVVLAAASHFFNLMFTTNMLESKSFEVELKDAEPDIIEQLVEFAYTARISVNSNNVQSLLDAANQYQIEPVKKMCVDFLKEQVDASNCLGISVLAECLDCPELKSTADDFIHQHFTEVYKTDEFLQLDVKRVTHLLSQDTLTVRAEDQVYDAAVRWLKYDEPNRQPFMVDILAKVRFPLISKNFLSKTVQAEPLIQDNPECLKMVISGMRYHLLSPEDREELAGGTRPRRKKHDYRIALFGGSQPQSCRYFNPKDYSWTDIRCPFEKRRDAACVFWDNVVYILGGSQLFPIKRMDCYNVVKDSWYSKLGPPTPRDSLAACAAEGKIYTSGGSEVGNSALYLFECYDTRTESWHTKPSMLTQRCSHGMVEANGLIYVCGGSLGNNVSGRVLSSCEVYDPATETWTELCSMIEPRKNHGLVFVKDKIFAVGGQNGLGGLDNVEYYDIKLNEWKMVSPMPWRGVTVKCAAVGSVIYVLAGFQGVGRLGHILEYNTETDKWVANSKVRAFPVTSCLICVVDTCGANEETLET</sequence>
<name>KLHL7_RAT</name>
<dbReference type="EMBL" id="BC083903">
    <property type="protein sequence ID" value="AAH83903.1"/>
    <property type="molecule type" value="mRNA"/>
</dbReference>
<dbReference type="RefSeq" id="NP_001012187.1">
    <property type="nucleotide sequence ID" value="NM_001012187.1"/>
</dbReference>
<dbReference type="SMR" id="Q5XHZ6"/>
<dbReference type="FunCoup" id="Q5XHZ6">
    <property type="interactions" value="1642"/>
</dbReference>
<dbReference type="STRING" id="10116.ENSRNOP00000013932"/>
<dbReference type="PhosphoSitePlus" id="Q5XHZ6"/>
<dbReference type="PaxDb" id="10116-ENSRNOP00000013932"/>
<dbReference type="Ensembl" id="ENSRNOT00000013932.7">
    <property type="protein sequence ID" value="ENSRNOP00000013932.4"/>
    <property type="gene ID" value="ENSRNOG00000010453.7"/>
</dbReference>
<dbReference type="GeneID" id="362303"/>
<dbReference type="KEGG" id="rno:362303"/>
<dbReference type="AGR" id="RGD:1305564"/>
<dbReference type="CTD" id="55975"/>
<dbReference type="RGD" id="1305564">
    <property type="gene designation" value="Klhl7"/>
</dbReference>
<dbReference type="eggNOG" id="KOG4441">
    <property type="taxonomic scope" value="Eukaryota"/>
</dbReference>
<dbReference type="GeneTree" id="ENSGT00940000155602"/>
<dbReference type="HOGENOM" id="CLU_004253_14_2_1"/>
<dbReference type="InParanoid" id="Q5XHZ6"/>
<dbReference type="OMA" id="WRAASPM"/>
<dbReference type="OrthoDB" id="19132at2759"/>
<dbReference type="PhylomeDB" id="Q5XHZ6"/>
<dbReference type="TreeFam" id="TF351653"/>
<dbReference type="UniPathway" id="UPA00143"/>
<dbReference type="PRO" id="PR:Q5XHZ6"/>
<dbReference type="Proteomes" id="UP000002494">
    <property type="component" value="Chromosome 4"/>
</dbReference>
<dbReference type="Bgee" id="ENSRNOG00000010453">
    <property type="expression patterns" value="Expressed in quadriceps femoris and 20 other cell types or tissues"/>
</dbReference>
<dbReference type="GO" id="GO:0031463">
    <property type="term" value="C:Cul3-RING ubiquitin ligase complex"/>
    <property type="evidence" value="ECO:0000250"/>
    <property type="project" value="UniProtKB"/>
</dbReference>
<dbReference type="GO" id="GO:0005737">
    <property type="term" value="C:cytoplasm"/>
    <property type="evidence" value="ECO:0000318"/>
    <property type="project" value="GO_Central"/>
</dbReference>
<dbReference type="GO" id="GO:0005829">
    <property type="term" value="C:cytosol"/>
    <property type="evidence" value="ECO:0007669"/>
    <property type="project" value="Ensembl"/>
</dbReference>
<dbReference type="GO" id="GO:0005730">
    <property type="term" value="C:nucleolus"/>
    <property type="evidence" value="ECO:0007669"/>
    <property type="project" value="Ensembl"/>
</dbReference>
<dbReference type="GO" id="GO:0005654">
    <property type="term" value="C:nucleoplasm"/>
    <property type="evidence" value="ECO:0007669"/>
    <property type="project" value="Ensembl"/>
</dbReference>
<dbReference type="GO" id="GO:0048471">
    <property type="term" value="C:perinuclear region of cytoplasm"/>
    <property type="evidence" value="ECO:0000250"/>
    <property type="project" value="UniProtKB"/>
</dbReference>
<dbReference type="GO" id="GO:0005886">
    <property type="term" value="C:plasma membrane"/>
    <property type="evidence" value="ECO:0007669"/>
    <property type="project" value="Ensembl"/>
</dbReference>
<dbReference type="GO" id="GO:0042802">
    <property type="term" value="F:identical protein binding"/>
    <property type="evidence" value="ECO:0000266"/>
    <property type="project" value="RGD"/>
</dbReference>
<dbReference type="GO" id="GO:0042803">
    <property type="term" value="F:protein homodimerization activity"/>
    <property type="evidence" value="ECO:0000250"/>
    <property type="project" value="UniProtKB"/>
</dbReference>
<dbReference type="GO" id="GO:1990756">
    <property type="term" value="F:ubiquitin-like ligase-substrate adaptor activity"/>
    <property type="evidence" value="ECO:0000318"/>
    <property type="project" value="GO_Central"/>
</dbReference>
<dbReference type="GO" id="GO:0043161">
    <property type="term" value="P:proteasome-mediated ubiquitin-dependent protein catabolic process"/>
    <property type="evidence" value="ECO:0000318"/>
    <property type="project" value="GO_Central"/>
</dbReference>
<dbReference type="GO" id="GO:0016567">
    <property type="term" value="P:protein ubiquitination"/>
    <property type="evidence" value="ECO:0000250"/>
    <property type="project" value="UniProtKB"/>
</dbReference>
<dbReference type="CDD" id="cd18447">
    <property type="entry name" value="BACK_KLHL7"/>
    <property type="match status" value="1"/>
</dbReference>
<dbReference type="CDD" id="cd18237">
    <property type="entry name" value="BTB_POZ_KLHL7"/>
    <property type="match status" value="1"/>
</dbReference>
<dbReference type="FunFam" id="1.25.40.420:FF:000007">
    <property type="entry name" value="Kelch-like family member 7"/>
    <property type="match status" value="1"/>
</dbReference>
<dbReference type="FunFam" id="2.120.10.80:FF:000013">
    <property type="entry name" value="Kelch-like family member 7"/>
    <property type="match status" value="1"/>
</dbReference>
<dbReference type="FunFam" id="3.30.710.10:FF:000080">
    <property type="entry name" value="kelch-like protein 7 isoform X1"/>
    <property type="match status" value="1"/>
</dbReference>
<dbReference type="Gene3D" id="1.25.40.420">
    <property type="match status" value="1"/>
</dbReference>
<dbReference type="Gene3D" id="2.120.10.80">
    <property type="entry name" value="Kelch-type beta propeller"/>
    <property type="match status" value="1"/>
</dbReference>
<dbReference type="Gene3D" id="3.30.710.10">
    <property type="entry name" value="Potassium Channel Kv1.1, Chain A"/>
    <property type="match status" value="1"/>
</dbReference>
<dbReference type="InterPro" id="IPR011705">
    <property type="entry name" value="BACK"/>
</dbReference>
<dbReference type="InterPro" id="IPR017096">
    <property type="entry name" value="BTB-kelch_protein"/>
</dbReference>
<dbReference type="InterPro" id="IPR000210">
    <property type="entry name" value="BTB/POZ_dom"/>
</dbReference>
<dbReference type="InterPro" id="IPR030599">
    <property type="entry name" value="BTB/POZ_KLHL7"/>
</dbReference>
<dbReference type="InterPro" id="IPR015915">
    <property type="entry name" value="Kelch-typ_b-propeller"/>
</dbReference>
<dbReference type="InterPro" id="IPR006652">
    <property type="entry name" value="Kelch_1"/>
</dbReference>
<dbReference type="InterPro" id="IPR047060">
    <property type="entry name" value="KLHL7_BACK"/>
</dbReference>
<dbReference type="InterPro" id="IPR011333">
    <property type="entry name" value="SKP1/BTB/POZ_sf"/>
</dbReference>
<dbReference type="PANTHER" id="PTHR24412">
    <property type="entry name" value="KELCH PROTEIN"/>
    <property type="match status" value="1"/>
</dbReference>
<dbReference type="PANTHER" id="PTHR24412:SF489">
    <property type="entry name" value="RING FINGER DOMAIN AND KELCH REPEAT-CONTAINING PROTEIN DDB_G0271372"/>
    <property type="match status" value="1"/>
</dbReference>
<dbReference type="Pfam" id="PF07707">
    <property type="entry name" value="BACK"/>
    <property type="match status" value="1"/>
</dbReference>
<dbReference type="Pfam" id="PF00651">
    <property type="entry name" value="BTB"/>
    <property type="match status" value="1"/>
</dbReference>
<dbReference type="Pfam" id="PF01344">
    <property type="entry name" value="Kelch_1"/>
    <property type="match status" value="1"/>
</dbReference>
<dbReference type="Pfam" id="PF24681">
    <property type="entry name" value="Kelch_KLHDC2_KLHL20_DRC7"/>
    <property type="match status" value="1"/>
</dbReference>
<dbReference type="PIRSF" id="PIRSF037037">
    <property type="entry name" value="Kelch-like_protein_gigaxonin"/>
    <property type="match status" value="1"/>
</dbReference>
<dbReference type="SMART" id="SM00875">
    <property type="entry name" value="BACK"/>
    <property type="match status" value="1"/>
</dbReference>
<dbReference type="SMART" id="SM00225">
    <property type="entry name" value="BTB"/>
    <property type="match status" value="1"/>
</dbReference>
<dbReference type="SMART" id="SM00612">
    <property type="entry name" value="Kelch"/>
    <property type="match status" value="4"/>
</dbReference>
<dbReference type="SUPFAM" id="SSF117281">
    <property type="entry name" value="Kelch motif"/>
    <property type="match status" value="1"/>
</dbReference>
<dbReference type="SUPFAM" id="SSF54695">
    <property type="entry name" value="POZ domain"/>
    <property type="match status" value="1"/>
</dbReference>
<dbReference type="PROSITE" id="PS50097">
    <property type="entry name" value="BTB"/>
    <property type="match status" value="1"/>
</dbReference>
<accession>Q5XHZ6</accession>
<comment type="function">
    <text evidence="1">Substrate-specific adapter of a BCR (BTB-CUL3-RBX1) E3 ubiquitin ligase complex. The BCR(KLHL7) complex acts by mediating ubiquitination and subsequent degradation of substrate proteins. Probably mediates 'Lys-48'-linked ubiquitination (By similarity).</text>
</comment>
<comment type="pathway">
    <text>Protein modification; protein ubiquitination.</text>
</comment>
<comment type="subunit">
    <text evidence="1">Homodimer. Component of the BCR(KLHL7) E3 ubiquitin ligase complex, at least composed of CUL3 and KLHL7 and RBX1 (By similarity).</text>
</comment>
<comment type="subcellular location">
    <subcellularLocation>
        <location evidence="2">Nucleus</location>
    </subcellularLocation>
    <subcellularLocation>
        <location evidence="2">Cytoplasm</location>
    </subcellularLocation>
    <text evidence="2">Colocalizes with CUL3 in punctate structures at the perinuclear region of the cytoplasm.</text>
</comment>
<feature type="chain" id="PRO_0000228990" description="Kelch-like protein 7">
    <location>
        <begin position="1"/>
        <end position="586"/>
    </location>
</feature>
<feature type="domain" description="BTB" evidence="3">
    <location>
        <begin position="44"/>
        <end position="111"/>
    </location>
</feature>
<feature type="domain" description="BACK">
    <location>
        <begin position="146"/>
        <end position="248"/>
    </location>
</feature>
<feature type="repeat" description="Kelch 1">
    <location>
        <begin position="294"/>
        <end position="336"/>
    </location>
</feature>
<feature type="repeat" description="Kelch 2">
    <location>
        <begin position="337"/>
        <end position="382"/>
    </location>
</feature>
<feature type="repeat" description="Kelch 3">
    <location>
        <begin position="383"/>
        <end position="430"/>
    </location>
</feature>
<feature type="repeat" description="Kelch 4">
    <location>
        <begin position="431"/>
        <end position="481"/>
    </location>
</feature>
<feature type="repeat" description="Kelch 5">
    <location>
        <begin position="483"/>
        <end position="528"/>
    </location>
</feature>
<feature type="repeat" description="Kelch 6">
    <location>
        <begin position="530"/>
        <end position="575"/>
    </location>
</feature>
<evidence type="ECO:0000250" key="1"/>
<evidence type="ECO:0000250" key="2">
    <source>
        <dbReference type="UniProtKB" id="Q8IXQ5"/>
    </source>
</evidence>
<evidence type="ECO:0000255" key="3">
    <source>
        <dbReference type="PROSITE-ProRule" id="PRU00037"/>
    </source>
</evidence>
<protein>
    <recommendedName>
        <fullName>Kelch-like protein 7</fullName>
    </recommendedName>
</protein>